<accession>Q0TAW9</accession>
<sequence length="207" mass="23431">MLNKLSLLLKDAGISLTDHQKNQLIAYVNMLHKWNKAYNLTSVRDPNEMLVRHILDSIVVAPYLQGERFIDVGTGPGLPGIPLSIVRPEAHFTLLDSLGKRVRFLRQVQHELKLENIEPVQSRVEEFPSEPPFDGVISRAFASLNDMVSWCHHLPGEQGRFYALKGQMPEDEIALLPEEYQVESVVKLQVPALDGERHLVVIKANKI</sequence>
<comment type="function">
    <text evidence="1">Specifically methylates the N7 position of guanine in position 527 of 16S rRNA.</text>
</comment>
<comment type="catalytic activity">
    <reaction evidence="1">
        <text>guanosine(527) in 16S rRNA + S-adenosyl-L-methionine = N(7)-methylguanosine(527) in 16S rRNA + S-adenosyl-L-homocysteine</text>
        <dbReference type="Rhea" id="RHEA:42732"/>
        <dbReference type="Rhea" id="RHEA-COMP:10209"/>
        <dbReference type="Rhea" id="RHEA-COMP:10210"/>
        <dbReference type="ChEBI" id="CHEBI:57856"/>
        <dbReference type="ChEBI" id="CHEBI:59789"/>
        <dbReference type="ChEBI" id="CHEBI:74269"/>
        <dbReference type="ChEBI" id="CHEBI:74480"/>
        <dbReference type="EC" id="2.1.1.170"/>
    </reaction>
</comment>
<comment type="subcellular location">
    <subcellularLocation>
        <location evidence="1">Cytoplasm</location>
    </subcellularLocation>
</comment>
<comment type="similarity">
    <text evidence="1">Belongs to the methyltransferase superfamily. RNA methyltransferase RsmG family.</text>
</comment>
<feature type="chain" id="PRO_1000010141" description="Ribosomal RNA small subunit methyltransferase G">
    <location>
        <begin position="1"/>
        <end position="207"/>
    </location>
</feature>
<feature type="binding site" evidence="1">
    <location>
        <position position="73"/>
    </location>
    <ligand>
        <name>S-adenosyl-L-methionine</name>
        <dbReference type="ChEBI" id="CHEBI:59789"/>
    </ligand>
</feature>
<feature type="binding site" evidence="1">
    <location>
        <position position="78"/>
    </location>
    <ligand>
        <name>S-adenosyl-L-methionine</name>
        <dbReference type="ChEBI" id="CHEBI:59789"/>
    </ligand>
</feature>
<feature type="binding site" evidence="1">
    <location>
        <begin position="124"/>
        <end position="125"/>
    </location>
    <ligand>
        <name>S-adenosyl-L-methionine</name>
        <dbReference type="ChEBI" id="CHEBI:59789"/>
    </ligand>
</feature>
<feature type="binding site" evidence="1">
    <location>
        <position position="139"/>
    </location>
    <ligand>
        <name>S-adenosyl-L-methionine</name>
        <dbReference type="ChEBI" id="CHEBI:59789"/>
    </ligand>
</feature>
<keyword id="KW-0963">Cytoplasm</keyword>
<keyword id="KW-0489">Methyltransferase</keyword>
<keyword id="KW-0698">rRNA processing</keyword>
<keyword id="KW-0949">S-adenosyl-L-methionine</keyword>
<keyword id="KW-0808">Transferase</keyword>
<reference key="1">
    <citation type="journal article" date="2006" name="Mol. Microbiol.">
        <title>Role of pathogenicity island-associated integrases in the genome plasticity of uropathogenic Escherichia coli strain 536.</title>
        <authorList>
            <person name="Hochhut B."/>
            <person name="Wilde C."/>
            <person name="Balling G."/>
            <person name="Middendorf B."/>
            <person name="Dobrindt U."/>
            <person name="Brzuszkiewicz E."/>
            <person name="Gottschalk G."/>
            <person name="Carniel E."/>
            <person name="Hacker J."/>
        </authorList>
    </citation>
    <scope>NUCLEOTIDE SEQUENCE [LARGE SCALE GENOMIC DNA]</scope>
    <source>
        <strain>536 / UPEC</strain>
    </source>
</reference>
<evidence type="ECO:0000255" key="1">
    <source>
        <dbReference type="HAMAP-Rule" id="MF_00074"/>
    </source>
</evidence>
<proteinExistence type="inferred from homology"/>
<gene>
    <name evidence="1" type="primary">rsmG</name>
    <name type="ordered locus">ECP_3939</name>
</gene>
<organism>
    <name type="scientific">Escherichia coli O6:K15:H31 (strain 536 / UPEC)</name>
    <dbReference type="NCBI Taxonomy" id="362663"/>
    <lineage>
        <taxon>Bacteria</taxon>
        <taxon>Pseudomonadati</taxon>
        <taxon>Pseudomonadota</taxon>
        <taxon>Gammaproteobacteria</taxon>
        <taxon>Enterobacterales</taxon>
        <taxon>Enterobacteriaceae</taxon>
        <taxon>Escherichia</taxon>
    </lineage>
</organism>
<dbReference type="EC" id="2.1.1.170" evidence="1"/>
<dbReference type="EMBL" id="CP000247">
    <property type="protein sequence ID" value="ABG71910.1"/>
    <property type="molecule type" value="Genomic_DNA"/>
</dbReference>
<dbReference type="RefSeq" id="WP_000932839.1">
    <property type="nucleotide sequence ID" value="NC_008253.1"/>
</dbReference>
<dbReference type="SMR" id="Q0TAW9"/>
<dbReference type="GeneID" id="93778227"/>
<dbReference type="KEGG" id="ecp:ECP_3939"/>
<dbReference type="HOGENOM" id="CLU_065341_2_2_6"/>
<dbReference type="Proteomes" id="UP000009182">
    <property type="component" value="Chromosome"/>
</dbReference>
<dbReference type="GO" id="GO:0005829">
    <property type="term" value="C:cytosol"/>
    <property type="evidence" value="ECO:0007669"/>
    <property type="project" value="TreeGrafter"/>
</dbReference>
<dbReference type="GO" id="GO:0070043">
    <property type="term" value="F:rRNA (guanine-N7-)-methyltransferase activity"/>
    <property type="evidence" value="ECO:0007669"/>
    <property type="project" value="UniProtKB-UniRule"/>
</dbReference>
<dbReference type="CDD" id="cd02440">
    <property type="entry name" value="AdoMet_MTases"/>
    <property type="match status" value="1"/>
</dbReference>
<dbReference type="FunFam" id="3.40.50.150:FF:000032">
    <property type="entry name" value="Ribosomal RNA small subunit methyltransferase G"/>
    <property type="match status" value="1"/>
</dbReference>
<dbReference type="Gene3D" id="3.40.50.150">
    <property type="entry name" value="Vaccinia Virus protein VP39"/>
    <property type="match status" value="1"/>
</dbReference>
<dbReference type="HAMAP" id="MF_00074">
    <property type="entry name" value="16SrRNA_methyltr_G"/>
    <property type="match status" value="1"/>
</dbReference>
<dbReference type="InterPro" id="IPR003682">
    <property type="entry name" value="rRNA_ssu_MeTfrase_G"/>
</dbReference>
<dbReference type="InterPro" id="IPR029063">
    <property type="entry name" value="SAM-dependent_MTases_sf"/>
</dbReference>
<dbReference type="NCBIfam" id="TIGR00138">
    <property type="entry name" value="rsmG_gidB"/>
    <property type="match status" value="1"/>
</dbReference>
<dbReference type="PANTHER" id="PTHR31760">
    <property type="entry name" value="S-ADENOSYL-L-METHIONINE-DEPENDENT METHYLTRANSFERASES SUPERFAMILY PROTEIN"/>
    <property type="match status" value="1"/>
</dbReference>
<dbReference type="PANTHER" id="PTHR31760:SF0">
    <property type="entry name" value="S-ADENOSYL-L-METHIONINE-DEPENDENT METHYLTRANSFERASES SUPERFAMILY PROTEIN"/>
    <property type="match status" value="1"/>
</dbReference>
<dbReference type="Pfam" id="PF02527">
    <property type="entry name" value="GidB"/>
    <property type="match status" value="1"/>
</dbReference>
<dbReference type="PIRSF" id="PIRSF003078">
    <property type="entry name" value="GidB"/>
    <property type="match status" value="1"/>
</dbReference>
<dbReference type="SUPFAM" id="SSF53335">
    <property type="entry name" value="S-adenosyl-L-methionine-dependent methyltransferases"/>
    <property type="match status" value="1"/>
</dbReference>
<name>RSMG_ECOL5</name>
<protein>
    <recommendedName>
        <fullName evidence="1">Ribosomal RNA small subunit methyltransferase G</fullName>
        <ecNumber evidence="1">2.1.1.170</ecNumber>
    </recommendedName>
    <alternativeName>
        <fullName evidence="1">16S rRNA 7-methylguanosine methyltransferase</fullName>
        <shortName evidence="1">16S rRNA m7G methyltransferase</shortName>
    </alternativeName>
</protein>